<organism>
    <name type="scientific">Prochlorococcus marinus (strain MIT 9211)</name>
    <dbReference type="NCBI Taxonomy" id="93059"/>
    <lineage>
        <taxon>Bacteria</taxon>
        <taxon>Bacillati</taxon>
        <taxon>Cyanobacteriota</taxon>
        <taxon>Cyanophyceae</taxon>
        <taxon>Synechococcales</taxon>
        <taxon>Prochlorococcaceae</taxon>
        <taxon>Prochlorococcus</taxon>
    </lineage>
</organism>
<protein>
    <recommendedName>
        <fullName evidence="1">Acetyl-coenzyme A carboxylase carboxyl transferase subunit beta</fullName>
        <shortName evidence="1">ACCase subunit beta</shortName>
        <shortName evidence="1">Acetyl-CoA carboxylase carboxyltransferase subunit beta</shortName>
        <ecNumber evidence="1">2.1.3.15</ecNumber>
    </recommendedName>
</protein>
<name>ACCD_PROM4</name>
<reference key="1">
    <citation type="journal article" date="2007" name="PLoS Genet.">
        <title>Patterns and implications of gene gain and loss in the evolution of Prochlorococcus.</title>
        <authorList>
            <person name="Kettler G.C."/>
            <person name="Martiny A.C."/>
            <person name="Huang K."/>
            <person name="Zucker J."/>
            <person name="Coleman M.L."/>
            <person name="Rodrigue S."/>
            <person name="Chen F."/>
            <person name="Lapidus A."/>
            <person name="Ferriera S."/>
            <person name="Johnson J."/>
            <person name="Steglich C."/>
            <person name="Church G.M."/>
            <person name="Richardson P."/>
            <person name="Chisholm S.W."/>
        </authorList>
    </citation>
    <scope>NUCLEOTIDE SEQUENCE [LARGE SCALE GENOMIC DNA]</scope>
    <source>
        <strain>MIT 9211</strain>
    </source>
</reference>
<proteinExistence type="inferred from homology"/>
<sequence>MSLFDWFAARRKDQFVGKVIQEAEEADGLWGKCPECSQVVYRKDLLENANVCSNCGHHNRINSDERIKLIADQNSFKSTDKHLSPVDPLGFKDRRAYADRLRESQSSTGMKDGVTTGVCQVEQIPLALAVMDFRFMGGSMGSVVGEKITRLIEKATNQKLPLLIVCASGGARMQEGMLSLMQMAKISGALERHREAELLYMPLLTHPTTGGVTASFAMLGDLILAEPKALIGFAGRRVIEQTLREKLPDNFQTAEYLLDHGFVDKIIPRTQLKKTLGVLLRLHGYREKRK</sequence>
<dbReference type="EC" id="2.1.3.15" evidence="1"/>
<dbReference type="EMBL" id="CP000878">
    <property type="protein sequence ID" value="ABX08908.1"/>
    <property type="molecule type" value="Genomic_DNA"/>
</dbReference>
<dbReference type="RefSeq" id="WP_012195529.1">
    <property type="nucleotide sequence ID" value="NC_009976.1"/>
</dbReference>
<dbReference type="SMR" id="A9BAP6"/>
<dbReference type="STRING" id="93059.P9211_09771"/>
<dbReference type="KEGG" id="pmj:P9211_09771"/>
<dbReference type="eggNOG" id="COG0777">
    <property type="taxonomic scope" value="Bacteria"/>
</dbReference>
<dbReference type="HOGENOM" id="CLU_015486_1_1_3"/>
<dbReference type="OrthoDB" id="9772975at2"/>
<dbReference type="UniPathway" id="UPA00655">
    <property type="reaction ID" value="UER00711"/>
</dbReference>
<dbReference type="Proteomes" id="UP000000788">
    <property type="component" value="Chromosome"/>
</dbReference>
<dbReference type="GO" id="GO:0009317">
    <property type="term" value="C:acetyl-CoA carboxylase complex"/>
    <property type="evidence" value="ECO:0007669"/>
    <property type="project" value="InterPro"/>
</dbReference>
<dbReference type="GO" id="GO:0003989">
    <property type="term" value="F:acetyl-CoA carboxylase activity"/>
    <property type="evidence" value="ECO:0007669"/>
    <property type="project" value="InterPro"/>
</dbReference>
<dbReference type="GO" id="GO:0005524">
    <property type="term" value="F:ATP binding"/>
    <property type="evidence" value="ECO:0007669"/>
    <property type="project" value="UniProtKB-KW"/>
</dbReference>
<dbReference type="GO" id="GO:0016743">
    <property type="term" value="F:carboxyl- or carbamoyltransferase activity"/>
    <property type="evidence" value="ECO:0007669"/>
    <property type="project" value="UniProtKB-UniRule"/>
</dbReference>
<dbReference type="GO" id="GO:0008270">
    <property type="term" value="F:zinc ion binding"/>
    <property type="evidence" value="ECO:0007669"/>
    <property type="project" value="UniProtKB-UniRule"/>
</dbReference>
<dbReference type="GO" id="GO:0006633">
    <property type="term" value="P:fatty acid biosynthetic process"/>
    <property type="evidence" value="ECO:0007669"/>
    <property type="project" value="UniProtKB-KW"/>
</dbReference>
<dbReference type="GO" id="GO:2001295">
    <property type="term" value="P:malonyl-CoA biosynthetic process"/>
    <property type="evidence" value="ECO:0007669"/>
    <property type="project" value="UniProtKB-UniRule"/>
</dbReference>
<dbReference type="Gene3D" id="3.90.226.10">
    <property type="entry name" value="2-enoyl-CoA Hydratase, Chain A, domain 1"/>
    <property type="match status" value="1"/>
</dbReference>
<dbReference type="HAMAP" id="MF_01395">
    <property type="entry name" value="AcetylCoA_CT_beta"/>
    <property type="match status" value="1"/>
</dbReference>
<dbReference type="InterPro" id="IPR034733">
    <property type="entry name" value="AcCoA_carboxyl_beta"/>
</dbReference>
<dbReference type="InterPro" id="IPR000438">
    <property type="entry name" value="Acetyl_CoA_COase_Trfase_b_su"/>
</dbReference>
<dbReference type="InterPro" id="IPR029045">
    <property type="entry name" value="ClpP/crotonase-like_dom_sf"/>
</dbReference>
<dbReference type="InterPro" id="IPR011762">
    <property type="entry name" value="COA_CT_N"/>
</dbReference>
<dbReference type="InterPro" id="IPR041010">
    <property type="entry name" value="Znf-ACC"/>
</dbReference>
<dbReference type="NCBIfam" id="TIGR00515">
    <property type="entry name" value="accD"/>
    <property type="match status" value="1"/>
</dbReference>
<dbReference type="PANTHER" id="PTHR42995">
    <property type="entry name" value="ACETYL-COENZYME A CARBOXYLASE CARBOXYL TRANSFERASE SUBUNIT BETA, CHLOROPLASTIC"/>
    <property type="match status" value="1"/>
</dbReference>
<dbReference type="PANTHER" id="PTHR42995:SF5">
    <property type="entry name" value="ACETYL-COENZYME A CARBOXYLASE CARBOXYL TRANSFERASE SUBUNIT BETA, CHLOROPLASTIC"/>
    <property type="match status" value="1"/>
</dbReference>
<dbReference type="Pfam" id="PF01039">
    <property type="entry name" value="Carboxyl_trans"/>
    <property type="match status" value="1"/>
</dbReference>
<dbReference type="Pfam" id="PF17848">
    <property type="entry name" value="Zn_ribbon_ACC"/>
    <property type="match status" value="1"/>
</dbReference>
<dbReference type="PRINTS" id="PR01070">
    <property type="entry name" value="ACCCTRFRASEB"/>
</dbReference>
<dbReference type="SUPFAM" id="SSF52096">
    <property type="entry name" value="ClpP/crotonase"/>
    <property type="match status" value="1"/>
</dbReference>
<dbReference type="PROSITE" id="PS50980">
    <property type="entry name" value="COA_CT_NTER"/>
    <property type="match status" value="1"/>
</dbReference>
<feature type="chain" id="PRO_0000359019" description="Acetyl-coenzyme A carboxylase carboxyl transferase subunit beta">
    <location>
        <begin position="1"/>
        <end position="290"/>
    </location>
</feature>
<feature type="domain" description="CoA carboxyltransferase N-terminal" evidence="2">
    <location>
        <begin position="29"/>
        <end position="290"/>
    </location>
</feature>
<feature type="zinc finger region" description="C4-type" evidence="1">
    <location>
        <begin position="33"/>
        <end position="55"/>
    </location>
</feature>
<feature type="binding site" evidence="1">
    <location>
        <position position="33"/>
    </location>
    <ligand>
        <name>Zn(2+)</name>
        <dbReference type="ChEBI" id="CHEBI:29105"/>
    </ligand>
</feature>
<feature type="binding site" evidence="1">
    <location>
        <position position="36"/>
    </location>
    <ligand>
        <name>Zn(2+)</name>
        <dbReference type="ChEBI" id="CHEBI:29105"/>
    </ligand>
</feature>
<feature type="binding site" evidence="1">
    <location>
        <position position="52"/>
    </location>
    <ligand>
        <name>Zn(2+)</name>
        <dbReference type="ChEBI" id="CHEBI:29105"/>
    </ligand>
</feature>
<feature type="binding site" evidence="1">
    <location>
        <position position="55"/>
    </location>
    <ligand>
        <name>Zn(2+)</name>
        <dbReference type="ChEBI" id="CHEBI:29105"/>
    </ligand>
</feature>
<gene>
    <name evidence="1" type="primary">accD</name>
    <name type="ordered locus">P9211_09771</name>
</gene>
<evidence type="ECO:0000255" key="1">
    <source>
        <dbReference type="HAMAP-Rule" id="MF_01395"/>
    </source>
</evidence>
<evidence type="ECO:0000255" key="2">
    <source>
        <dbReference type="PROSITE-ProRule" id="PRU01136"/>
    </source>
</evidence>
<accession>A9BAP6</accession>
<comment type="function">
    <text evidence="1">Component of the acetyl coenzyme A carboxylase (ACC) complex. Biotin carboxylase (BC) catalyzes the carboxylation of biotin on its carrier protein (BCCP) and then the CO(2) group is transferred by the transcarboxylase to acetyl-CoA to form malonyl-CoA.</text>
</comment>
<comment type="catalytic activity">
    <reaction evidence="1">
        <text>N(6)-carboxybiotinyl-L-lysyl-[protein] + acetyl-CoA = N(6)-biotinyl-L-lysyl-[protein] + malonyl-CoA</text>
        <dbReference type="Rhea" id="RHEA:54728"/>
        <dbReference type="Rhea" id="RHEA-COMP:10505"/>
        <dbReference type="Rhea" id="RHEA-COMP:10506"/>
        <dbReference type="ChEBI" id="CHEBI:57288"/>
        <dbReference type="ChEBI" id="CHEBI:57384"/>
        <dbReference type="ChEBI" id="CHEBI:83144"/>
        <dbReference type="ChEBI" id="CHEBI:83145"/>
        <dbReference type="EC" id="2.1.3.15"/>
    </reaction>
</comment>
<comment type="cofactor">
    <cofactor evidence="1">
        <name>Zn(2+)</name>
        <dbReference type="ChEBI" id="CHEBI:29105"/>
    </cofactor>
    <text evidence="1">Binds 1 zinc ion per subunit.</text>
</comment>
<comment type="pathway">
    <text evidence="1">Lipid metabolism; malonyl-CoA biosynthesis; malonyl-CoA from acetyl-CoA: step 1/1.</text>
</comment>
<comment type="subunit">
    <text evidence="1">Acetyl-CoA carboxylase is a heterohexamer composed of biotin carboxyl carrier protein (AccB), biotin carboxylase (AccC) and two subunits each of ACCase subunit alpha (AccA) and ACCase subunit beta (AccD).</text>
</comment>
<comment type="subcellular location">
    <subcellularLocation>
        <location evidence="1">Cytoplasm</location>
    </subcellularLocation>
</comment>
<comment type="similarity">
    <text evidence="1">Belongs to the AccD/PCCB family.</text>
</comment>
<keyword id="KW-0067">ATP-binding</keyword>
<keyword id="KW-0963">Cytoplasm</keyword>
<keyword id="KW-0275">Fatty acid biosynthesis</keyword>
<keyword id="KW-0276">Fatty acid metabolism</keyword>
<keyword id="KW-0444">Lipid biosynthesis</keyword>
<keyword id="KW-0443">Lipid metabolism</keyword>
<keyword id="KW-0479">Metal-binding</keyword>
<keyword id="KW-0547">Nucleotide-binding</keyword>
<keyword id="KW-1185">Reference proteome</keyword>
<keyword id="KW-0808">Transferase</keyword>
<keyword id="KW-0862">Zinc</keyword>
<keyword id="KW-0863">Zinc-finger</keyword>